<feature type="chain" id="PRO_0000217540" description="Magnesium-protoporphyrin IX monomethyl ester [oxidative] cyclase 2">
    <location>
        <begin position="1"/>
        <end position="358"/>
    </location>
</feature>
<name>ACSF2_SYNY3</name>
<gene>
    <name evidence="1" type="primary">acsF2</name>
    <name type="ordered locus">sll1874</name>
</gene>
<comment type="function">
    <text evidence="1">Catalyzes the formation of the isocyclic ring in chlorophyll biosynthesis. Mediates the cyclase reaction, which results in the formation of divinylprotochlorophyllide (Pchlide) characteristic of all chlorophylls from magnesium-protoporphyrin IX 13-monomethyl ester (MgPMME).</text>
</comment>
<comment type="catalytic activity">
    <reaction evidence="1">
        <text>Mg-protoporphyrin IX 13-monomethyl ester + 3 NADPH + 3 O2 + 2 H(+) = 3,8-divinyl protochlorophyllide a + 3 NADP(+) + 5 H2O</text>
        <dbReference type="Rhea" id="RHEA:33235"/>
        <dbReference type="ChEBI" id="CHEBI:15377"/>
        <dbReference type="ChEBI" id="CHEBI:15378"/>
        <dbReference type="ChEBI" id="CHEBI:15379"/>
        <dbReference type="ChEBI" id="CHEBI:57783"/>
        <dbReference type="ChEBI" id="CHEBI:58349"/>
        <dbReference type="ChEBI" id="CHEBI:58632"/>
        <dbReference type="ChEBI" id="CHEBI:60491"/>
        <dbReference type="EC" id="1.14.13.81"/>
    </reaction>
</comment>
<comment type="cofactor">
    <cofactor evidence="1">
        <name>Fe cation</name>
        <dbReference type="ChEBI" id="CHEBI:24875"/>
    </cofactor>
</comment>
<comment type="pathway">
    <text evidence="1">Porphyrin-containing compound metabolism; chlorophyll biosynthesis (light-independent).</text>
</comment>
<comment type="similarity">
    <text evidence="1">Belongs to the AcsF family.</text>
</comment>
<reference key="1">
    <citation type="journal article" date="1996" name="DNA Res.">
        <title>Sequence analysis of the genome of the unicellular cyanobacterium Synechocystis sp. strain PCC6803. II. Sequence determination of the entire genome and assignment of potential protein-coding regions.</title>
        <authorList>
            <person name="Kaneko T."/>
            <person name="Sato S."/>
            <person name="Kotani H."/>
            <person name="Tanaka A."/>
            <person name="Asamizu E."/>
            <person name="Nakamura Y."/>
            <person name="Miyajima N."/>
            <person name="Hirosawa M."/>
            <person name="Sugiura M."/>
            <person name="Sasamoto S."/>
            <person name="Kimura T."/>
            <person name="Hosouchi T."/>
            <person name="Matsuno A."/>
            <person name="Muraki A."/>
            <person name="Nakazaki N."/>
            <person name="Naruo K."/>
            <person name="Okumura S."/>
            <person name="Shimpo S."/>
            <person name="Takeuchi C."/>
            <person name="Wada T."/>
            <person name="Watanabe A."/>
            <person name="Yamada M."/>
            <person name="Yasuda M."/>
            <person name="Tabata S."/>
        </authorList>
    </citation>
    <scope>NUCLEOTIDE SEQUENCE [LARGE SCALE GENOMIC DNA]</scope>
    <source>
        <strain>ATCC 27184 / PCC 6803 / Kazusa</strain>
    </source>
</reference>
<evidence type="ECO:0000255" key="1">
    <source>
        <dbReference type="HAMAP-Rule" id="MF_01840"/>
    </source>
</evidence>
<keyword id="KW-0149">Chlorophyll biosynthesis</keyword>
<keyword id="KW-0408">Iron</keyword>
<keyword id="KW-0479">Metal-binding</keyword>
<keyword id="KW-0521">NADP</keyword>
<keyword id="KW-0560">Oxidoreductase</keyword>
<keyword id="KW-0602">Photosynthesis</keyword>
<keyword id="KW-1185">Reference proteome</keyword>
<dbReference type="EC" id="1.14.13.81" evidence="1"/>
<dbReference type="EMBL" id="BA000022">
    <property type="protein sequence ID" value="BAA18220.1"/>
    <property type="molecule type" value="Genomic_DNA"/>
</dbReference>
<dbReference type="PIR" id="S75659">
    <property type="entry name" value="S75659"/>
</dbReference>
<dbReference type="IntAct" id="P74134">
    <property type="interactions" value="2"/>
</dbReference>
<dbReference type="STRING" id="1148.gene:10499093"/>
<dbReference type="PaxDb" id="1148-1653305"/>
<dbReference type="EnsemblBacteria" id="BAA18220">
    <property type="protein sequence ID" value="BAA18220"/>
    <property type="gene ID" value="BAA18220"/>
</dbReference>
<dbReference type="KEGG" id="syn:sll1874"/>
<dbReference type="eggNOG" id="COG1633">
    <property type="taxonomic scope" value="Bacteria"/>
</dbReference>
<dbReference type="InParanoid" id="P74134"/>
<dbReference type="PhylomeDB" id="P74134"/>
<dbReference type="BioCyc" id="MetaCyc:MONOMER-17789"/>
<dbReference type="UniPathway" id="UPA00670"/>
<dbReference type="Proteomes" id="UP000001425">
    <property type="component" value="Chromosome"/>
</dbReference>
<dbReference type="GO" id="GO:0005506">
    <property type="term" value="F:iron ion binding"/>
    <property type="evidence" value="ECO:0007669"/>
    <property type="project" value="UniProtKB-UniRule"/>
</dbReference>
<dbReference type="GO" id="GO:0048529">
    <property type="term" value="F:magnesium-protoporphyrin IX monomethyl ester (oxidative) cyclase activity"/>
    <property type="evidence" value="ECO:0000318"/>
    <property type="project" value="GO_Central"/>
</dbReference>
<dbReference type="GO" id="GO:0015995">
    <property type="term" value="P:chlorophyll biosynthetic process"/>
    <property type="evidence" value="ECO:0000318"/>
    <property type="project" value="GO_Central"/>
</dbReference>
<dbReference type="GO" id="GO:0036068">
    <property type="term" value="P:light-independent chlorophyll biosynthetic process"/>
    <property type="evidence" value="ECO:0007669"/>
    <property type="project" value="UniProtKB-UniRule"/>
</dbReference>
<dbReference type="GO" id="GO:0015979">
    <property type="term" value="P:photosynthesis"/>
    <property type="evidence" value="ECO:0007669"/>
    <property type="project" value="UniProtKB-UniRule"/>
</dbReference>
<dbReference type="CDD" id="cd01047">
    <property type="entry name" value="ACSF"/>
    <property type="match status" value="1"/>
</dbReference>
<dbReference type="HAMAP" id="MF_01840">
    <property type="entry name" value="AcsF"/>
    <property type="match status" value="1"/>
</dbReference>
<dbReference type="InterPro" id="IPR008434">
    <property type="entry name" value="AcsF"/>
</dbReference>
<dbReference type="InterPro" id="IPR009078">
    <property type="entry name" value="Ferritin-like_SF"/>
</dbReference>
<dbReference type="InterPro" id="IPR003251">
    <property type="entry name" value="Rr_diiron-bd_dom"/>
</dbReference>
<dbReference type="NCBIfam" id="TIGR02029">
    <property type="entry name" value="AcsF"/>
    <property type="match status" value="1"/>
</dbReference>
<dbReference type="NCBIfam" id="NF010172">
    <property type="entry name" value="PRK13654.1"/>
    <property type="match status" value="1"/>
</dbReference>
<dbReference type="PANTHER" id="PTHR31053">
    <property type="entry name" value="MAGNESIUM-PROTOPORPHYRIN IX MONOMETHYL ESTER [OXIDATIVE] CYCLASE, CHLOROPLASTIC"/>
    <property type="match status" value="1"/>
</dbReference>
<dbReference type="PANTHER" id="PTHR31053:SF2">
    <property type="entry name" value="MAGNESIUM-PROTOPORPHYRIN IX MONOMETHYL ESTER [OXIDATIVE] CYCLASE, CHLOROPLASTIC"/>
    <property type="match status" value="1"/>
</dbReference>
<dbReference type="Pfam" id="PF02915">
    <property type="entry name" value="Rubrerythrin"/>
    <property type="match status" value="1"/>
</dbReference>
<dbReference type="SUPFAM" id="SSF47240">
    <property type="entry name" value="Ferritin-like"/>
    <property type="match status" value="1"/>
</dbReference>
<sequence>MVSTTLPTQLETIRPGIKAPVKETLLTPRFYTTDFDKVANLVLTLQDEEIEAALEELRADYNRYHFVRNDDFKRSFDHIDGATRLAFIDFLERSCTSEFSGFLLFKELSRRLKNRSPKLAEAFHLLARDEARHAGFINKAMADFGLSLDLRYLTQKRTYTFFPPEWVIYTVYLSEKIGYWRYILMFRHLEKNPDHNIYPLFNYFECWCQDENRHGDFFKALLRSQTALWKTWQSRLWSRFFLLTVFVTHTLTVFERTDFYQSVGLDAKQYNVDVVTNTNATAARAFPEVLDTDNPKFFPRLEACASANEKLTAIANSEAPKLAKFCQKAPWIAVIIWQMICIFLQKPVDAEARRGMVC</sequence>
<organism>
    <name type="scientific">Synechocystis sp. (strain ATCC 27184 / PCC 6803 / Kazusa)</name>
    <dbReference type="NCBI Taxonomy" id="1111708"/>
    <lineage>
        <taxon>Bacteria</taxon>
        <taxon>Bacillati</taxon>
        <taxon>Cyanobacteriota</taxon>
        <taxon>Cyanophyceae</taxon>
        <taxon>Synechococcales</taxon>
        <taxon>Merismopediaceae</taxon>
        <taxon>Synechocystis</taxon>
    </lineage>
</organism>
<protein>
    <recommendedName>
        <fullName evidence="1">Magnesium-protoporphyrin IX monomethyl ester [oxidative] cyclase 2</fullName>
        <shortName evidence="1">Mg-protoporphyrin IX monomethyl ester oxidative cyclase 2</shortName>
        <ecNumber evidence="1">1.14.13.81</ecNumber>
    </recommendedName>
</protein>
<proteinExistence type="inferred from homology"/>
<accession>P74134</accession>